<proteinExistence type="evidence at protein level"/>
<gene>
    <name type="primary">Gimap4</name>
    <name evidence="7" type="synonym">Ian1</name>
    <name type="synonym">Imap4</name>
</gene>
<accession>Q99JY3</accession>
<accession>D3YTN4</accession>
<feature type="chain" id="PRO_0000190988" description="GTPase IMAP family member 4">
    <location>
        <begin position="1"/>
        <end position="328"/>
    </location>
</feature>
<feature type="domain" description="AIG1-type G" evidence="3">
    <location>
        <begin position="28"/>
        <end position="230"/>
    </location>
</feature>
<feature type="domain" description="IQ" evidence="2">
    <location>
        <begin position="233"/>
        <end position="262"/>
    </location>
</feature>
<feature type="region of interest" description="Disordered" evidence="4">
    <location>
        <begin position="1"/>
        <end position="25"/>
    </location>
</feature>
<feature type="region of interest" description="G1" evidence="3">
    <location>
        <begin position="37"/>
        <end position="44"/>
    </location>
</feature>
<feature type="region of interest" description="G2" evidence="3">
    <location>
        <begin position="64"/>
        <end position="68"/>
    </location>
</feature>
<feature type="region of interest" description="G3" evidence="3">
    <location>
        <begin position="85"/>
        <end position="88"/>
    </location>
</feature>
<feature type="region of interest" description="G4" evidence="3">
    <location>
        <begin position="154"/>
        <end position="157"/>
    </location>
</feature>
<feature type="region of interest" description="G5" evidence="3">
    <location>
        <begin position="190"/>
        <end position="192"/>
    </location>
</feature>
<feature type="binding site" evidence="1">
    <location>
        <begin position="37"/>
        <end position="45"/>
    </location>
    <ligand>
        <name>GTP</name>
        <dbReference type="ChEBI" id="CHEBI:37565"/>
    </ligand>
</feature>
<feature type="binding site" evidence="1">
    <location>
        <position position="58"/>
    </location>
    <ligand>
        <name>GTP</name>
        <dbReference type="ChEBI" id="CHEBI:37565"/>
    </ligand>
</feature>
<feature type="binding site" evidence="1">
    <location>
        <begin position="155"/>
        <end position="157"/>
    </location>
    <ligand>
        <name>GTP</name>
        <dbReference type="ChEBI" id="CHEBI:37565"/>
    </ligand>
</feature>
<feature type="binding site" evidence="1">
    <location>
        <position position="191"/>
    </location>
    <ligand>
        <name>GTP</name>
        <dbReference type="ChEBI" id="CHEBI:37565"/>
    </ligand>
</feature>
<feature type="splice variant" id="VSP_060167" description="In isoform 2.">
    <original>VRENGGR</original>
    <variation>FLSSRMK</variation>
    <location>
        <begin position="213"/>
        <end position="219"/>
    </location>
</feature>
<feature type="splice variant" id="VSP_060168" description="In isoform 2.">
    <location>
        <begin position="220"/>
        <end position="328"/>
    </location>
</feature>
<feature type="mutagenesis site" description="Loss of interaction with CALM1." evidence="6">
    <original>RMQELYREELER</original>
    <variation>QMQELYQEELEQ</variation>
    <location>
        <begin position="239"/>
        <end position="250"/>
    </location>
</feature>
<organism>
    <name type="scientific">Mus musculus</name>
    <name type="common">Mouse</name>
    <dbReference type="NCBI Taxonomy" id="10090"/>
    <lineage>
        <taxon>Eukaryota</taxon>
        <taxon>Metazoa</taxon>
        <taxon>Chordata</taxon>
        <taxon>Craniata</taxon>
        <taxon>Vertebrata</taxon>
        <taxon>Euteleostomi</taxon>
        <taxon>Mammalia</taxon>
        <taxon>Eutheria</taxon>
        <taxon>Euarchontoglires</taxon>
        <taxon>Glires</taxon>
        <taxon>Rodentia</taxon>
        <taxon>Myomorpha</taxon>
        <taxon>Muroidea</taxon>
        <taxon>Muridae</taxon>
        <taxon>Murinae</taxon>
        <taxon>Mus</taxon>
        <taxon>Mus</taxon>
    </lineage>
</organism>
<name>GIMA4_MOUSE</name>
<keyword id="KW-0025">Alternative splicing</keyword>
<keyword id="KW-0963">Cytoplasm</keyword>
<keyword id="KW-0342">GTP-binding</keyword>
<keyword id="KW-0547">Nucleotide-binding</keyword>
<keyword id="KW-0597">Phosphoprotein</keyword>
<keyword id="KW-1185">Reference proteome</keyword>
<comment type="function">
    <text evidence="5 6">During thymocyte development, may play a role in the regulation of apoptosis.</text>
</comment>
<comment type="subunit">
    <text evidence="5 6">Interacts (via IQ domain) with calmodulin/CALM1 only in the absence of Ca(2+) (PubMed:16569770). Interacts with BAX, but not with other Bcl-2 family members, including BAD, BAK1, BCL2, BCL2L1/Bcl-xL and BCL2L11/BimEL (PubMed:16509771).</text>
</comment>
<comment type="subcellular location">
    <subcellularLocation>
        <location evidence="5 6">Cytoplasm</location>
        <location evidence="5 6">Cytosol</location>
    </subcellularLocation>
</comment>
<comment type="alternative products">
    <event type="alternative splicing"/>
    <isoform>
        <id>Q99JY3-1</id>
        <name>1</name>
        <sequence type="displayed"/>
    </isoform>
    <isoform>
        <id>Q99JY3-2</id>
        <name>2</name>
        <sequence type="described" ref="VSP_060167 VSP_060168"/>
    </isoform>
</comment>
<comment type="tissue specificity">
    <text evidence="5 6">Expressed in thymus (in thymocytes), spleen (in splenocytes), lymph node and lung (PubMed:16509771). Expressed in B-cells and T-cells (at protein level) (PubMed:16509771, PubMed:16569770).</text>
</comment>
<comment type="developmental stage">
    <text evidence="5 6">Up-regulated during T cell development, including upon the maturation of CD4/CD8 double-positive to CD4 single-positive thymocytes.</text>
</comment>
<comment type="PTM">
    <text evidence="6">Phosphorylated at very low levels in resting splenocytes. Rapidly and transiently phosphorylated in response to splenocyte activation. Phosphorylation is increased in cells undergoing apoptosis.</text>
</comment>
<comment type="disruption phenotype">
    <text evidence="6">No visible phenotype. T-cell development, selection and activation in vivo appear to occur normally in knockout mice.</text>
</comment>
<comment type="similarity">
    <text evidence="9">Belongs to the TRAFAC class TrmE-Era-EngA-EngB-Septin-like GTPase superfamily. AIG1/Toc34/Toc159-like paraseptin GTPase family. IAN subfamily.</text>
</comment>
<evidence type="ECO:0000250" key="1">
    <source>
        <dbReference type="UniProtKB" id="Q9NUV9"/>
    </source>
</evidence>
<evidence type="ECO:0000255" key="2">
    <source>
        <dbReference type="PROSITE-ProRule" id="PRU00116"/>
    </source>
</evidence>
<evidence type="ECO:0000255" key="3">
    <source>
        <dbReference type="PROSITE-ProRule" id="PRU01057"/>
    </source>
</evidence>
<evidence type="ECO:0000256" key="4">
    <source>
        <dbReference type="SAM" id="MobiDB-lite"/>
    </source>
</evidence>
<evidence type="ECO:0000269" key="5">
    <source>
    </source>
</evidence>
<evidence type="ECO:0000269" key="6">
    <source>
    </source>
</evidence>
<evidence type="ECO:0000303" key="7">
    <source>
    </source>
</evidence>
<evidence type="ECO:0000303" key="8">
    <source>
    </source>
</evidence>
<evidence type="ECO:0000305" key="9"/>
<sequence>MEVQCGGAGFIPESSRSSHELGNQDQGIPQLRIVLLGKTGAGKSSTGNSILGEKVFNSGICAKSITKVCEKRVSTWDGKELVVVDTPGIFDTEVPDADTQREITRYVALTSPGPHALLLVVPLGRYTVEEHKATQKILDMFGKQARRFMILLLTRKDDLEDTDIHEYLEKAPKFFQEVMHEFQNRYCLFNNRASGAEKEEQKMQLLTLVQSMVRENGGRCFTNKMYESAECVIQKETLRMQELYREELEREKARIRREYEEQIKDLRDELEREIRRARMEREFKEREAIFTKNQQNARKEVENTSMILELIIKAWEIASFIFNQFMKD</sequence>
<reference key="1">
    <citation type="journal article" date="2009" name="PLoS Biol.">
        <title>Lineage-specific biology revealed by a finished genome assembly of the mouse.</title>
        <authorList>
            <person name="Church D.M."/>
            <person name="Goodstadt L."/>
            <person name="Hillier L.W."/>
            <person name="Zody M.C."/>
            <person name="Goldstein S."/>
            <person name="She X."/>
            <person name="Bult C.J."/>
            <person name="Agarwala R."/>
            <person name="Cherry J.L."/>
            <person name="DiCuccio M."/>
            <person name="Hlavina W."/>
            <person name="Kapustin Y."/>
            <person name="Meric P."/>
            <person name="Maglott D."/>
            <person name="Birtle Z."/>
            <person name="Marques A.C."/>
            <person name="Graves T."/>
            <person name="Zhou S."/>
            <person name="Teague B."/>
            <person name="Potamousis K."/>
            <person name="Churas C."/>
            <person name="Place M."/>
            <person name="Herschleb J."/>
            <person name="Runnheim R."/>
            <person name="Forrest D."/>
            <person name="Amos-Landgraf J."/>
            <person name="Schwartz D.C."/>
            <person name="Cheng Z."/>
            <person name="Lindblad-Toh K."/>
            <person name="Eichler E.E."/>
            <person name="Ponting C.P."/>
        </authorList>
    </citation>
    <scope>NUCLEOTIDE SEQUENCE [LARGE SCALE GENOMIC DNA]</scope>
    <source>
        <strain>C57BL/6J</strain>
    </source>
</reference>
<reference key="2">
    <citation type="journal article" date="2004" name="Genome Res.">
        <title>The status, quality, and expansion of the NIH full-length cDNA project: the Mammalian Gene Collection (MGC).</title>
        <authorList>
            <consortium name="The MGC Project Team"/>
        </authorList>
    </citation>
    <scope>NUCLEOTIDE SEQUENCE [LARGE SCALE MRNA] (ISOFORM 2)</scope>
    <source>
        <tissue>Mammary tumor</tissue>
    </source>
</reference>
<reference key="3">
    <citation type="journal article" date="2006" name="Blood">
        <title>Gimap4 accelerates T-cell death.</title>
        <authorList>
            <person name="Schnell S."/>
            <person name="Demolliere C."/>
            <person name="van den Berk P."/>
            <person name="Jacobs H."/>
        </authorList>
    </citation>
    <scope>FUNCTION</scope>
    <scope>INTERACTION WITH CALM1</scope>
    <scope>SUBCELLULAR LOCATION</scope>
    <scope>DISRUPTION PHENOTYPE</scope>
    <scope>TISSUE SPECIFICITY</scope>
    <scope>PHOSPHORYLATION</scope>
    <scope>DEVELOPMENTAL STAGE</scope>
    <scope>MUTAGENESIS OF 239-ARG--ARG-250</scope>
</reference>
<reference key="4">
    <citation type="journal article" date="2006" name="PLoS Biol.">
        <title>IAN family critically regulates survival and development of T lymphocytes.</title>
        <authorList>
            <person name="Nitta T."/>
            <person name="Nasreen M."/>
            <person name="Seike T."/>
            <person name="Goji A."/>
            <person name="Ohigashi I."/>
            <person name="Miyazaki T."/>
            <person name="Ohta T."/>
            <person name="Kanno M."/>
            <person name="Takahama Y."/>
        </authorList>
    </citation>
    <scope>FUNCTION</scope>
    <scope>INTERACTION WITH BAX</scope>
    <scope>SUBCELLULAR LOCATION</scope>
    <scope>DEVELOPMENTAL STAGE</scope>
    <scope>TISSUE SPECIFICITY</scope>
</reference>
<reference key="5">
    <citation type="journal article" date="2010" name="Cell">
        <title>A tissue-specific atlas of mouse protein phosphorylation and expression.</title>
        <authorList>
            <person name="Huttlin E.L."/>
            <person name="Jedrychowski M.P."/>
            <person name="Elias J.E."/>
            <person name="Goswami T."/>
            <person name="Rad R."/>
            <person name="Beausoleil S.A."/>
            <person name="Villen J."/>
            <person name="Haas W."/>
            <person name="Sowa M.E."/>
            <person name="Gygi S.P."/>
        </authorList>
    </citation>
    <scope>IDENTIFICATION BY MASS SPECTROMETRY [LARGE SCALE ANALYSIS]</scope>
    <source>
        <tissue>Brown adipose tissue</tissue>
        <tissue>Heart</tissue>
        <tissue>Kidney</tissue>
        <tissue>Liver</tissue>
        <tissue>Lung</tissue>
        <tissue>Pancreas</tissue>
        <tissue>Spleen</tissue>
        <tissue>Testis</tissue>
    </source>
</reference>
<protein>
    <recommendedName>
        <fullName>GTPase IMAP family member 4</fullName>
    </recommendedName>
    <alternativeName>
        <fullName evidence="8">Immunity-associated nucleotide 1 protein</fullName>
        <shortName evidence="8">IAN-1</shortName>
    </alternativeName>
    <alternativeName>
        <fullName>Immunity-associated protein 4</fullName>
    </alternativeName>
</protein>
<dbReference type="EMBL" id="AC153894">
    <property type="status" value="NOT_ANNOTATED_CDS"/>
    <property type="molecule type" value="Genomic_DNA"/>
</dbReference>
<dbReference type="EMBL" id="BC005577">
    <property type="protein sequence ID" value="AAH05577.1"/>
    <property type="molecule type" value="mRNA"/>
</dbReference>
<dbReference type="CCDS" id="CCDS20110.1">
    <molecule id="Q99JY3-1"/>
</dbReference>
<dbReference type="CCDS" id="CCDS57423.1">
    <molecule id="Q99JY3-2"/>
</dbReference>
<dbReference type="RefSeq" id="NP_001230128.1">
    <molecule id="Q99JY3-2"/>
    <property type="nucleotide sequence ID" value="NM_001243199.1"/>
</dbReference>
<dbReference type="RefSeq" id="NP_778155.2">
    <molecule id="Q99JY3-1"/>
    <property type="nucleotide sequence ID" value="NM_174990.4"/>
</dbReference>
<dbReference type="SMR" id="Q99JY3"/>
<dbReference type="FunCoup" id="Q99JY3">
    <property type="interactions" value="546"/>
</dbReference>
<dbReference type="IntAct" id="Q99JY3">
    <property type="interactions" value="1"/>
</dbReference>
<dbReference type="STRING" id="10090.ENSMUSP00000087524"/>
<dbReference type="iPTMnet" id="Q99JY3"/>
<dbReference type="PhosphoSitePlus" id="Q99JY3"/>
<dbReference type="jPOST" id="Q99JY3"/>
<dbReference type="PaxDb" id="10090-ENSMUSP00000087524"/>
<dbReference type="PeptideAtlas" id="Q99JY3"/>
<dbReference type="ProteomicsDB" id="271222">
    <molecule id="Q99JY3-1"/>
</dbReference>
<dbReference type="ProteomicsDB" id="357534"/>
<dbReference type="Antibodypedia" id="18614">
    <property type="antibodies" value="301 antibodies from 28 providers"/>
</dbReference>
<dbReference type="DNASU" id="107526"/>
<dbReference type="Ensembl" id="ENSMUST00000067506.14">
    <molecule id="Q99JY3-2"/>
    <property type="protein sequence ID" value="ENSMUSP00000068398.8"/>
    <property type="gene ID" value="ENSMUSG00000054435.17"/>
</dbReference>
<dbReference type="Ensembl" id="ENSMUST00000090070.6">
    <molecule id="Q99JY3-1"/>
    <property type="protein sequence ID" value="ENSMUSP00000087524.5"/>
    <property type="gene ID" value="ENSMUSG00000054435.17"/>
</dbReference>
<dbReference type="GeneID" id="107526"/>
<dbReference type="KEGG" id="mmu:107526"/>
<dbReference type="UCSC" id="uc009bvi.2">
    <molecule id="Q99JY3-1"/>
    <property type="organism name" value="mouse"/>
</dbReference>
<dbReference type="AGR" id="MGI:1349656"/>
<dbReference type="CTD" id="55303"/>
<dbReference type="MGI" id="MGI:1349656">
    <property type="gene designation" value="Gimap4"/>
</dbReference>
<dbReference type="VEuPathDB" id="HostDB:ENSMUSG00000054435"/>
<dbReference type="eggNOG" id="ENOG502R7PE">
    <property type="taxonomic scope" value="Eukaryota"/>
</dbReference>
<dbReference type="GeneTree" id="ENSGT00940000159317"/>
<dbReference type="HOGENOM" id="CLU_010468_3_3_1"/>
<dbReference type="InParanoid" id="Q99JY3"/>
<dbReference type="OMA" id="YLMEAPE"/>
<dbReference type="OrthoDB" id="5985928at2759"/>
<dbReference type="TreeFam" id="TF330845"/>
<dbReference type="BioGRID-ORCS" id="107526">
    <property type="hits" value="1 hit in 76 CRISPR screens"/>
</dbReference>
<dbReference type="ChiTaRS" id="Gimap4">
    <property type="organism name" value="mouse"/>
</dbReference>
<dbReference type="PRO" id="PR:Q99JY3"/>
<dbReference type="Proteomes" id="UP000000589">
    <property type="component" value="Chromosome 6"/>
</dbReference>
<dbReference type="RNAct" id="Q99JY3">
    <property type="molecule type" value="protein"/>
</dbReference>
<dbReference type="Bgee" id="ENSMUSG00000054435">
    <property type="expression patterns" value="Expressed in peripheral lymph node and 188 other cell types or tissues"/>
</dbReference>
<dbReference type="ExpressionAtlas" id="Q99JY3">
    <property type="expression patterns" value="baseline and differential"/>
</dbReference>
<dbReference type="GO" id="GO:0005829">
    <property type="term" value="C:cytosol"/>
    <property type="evidence" value="ECO:0000250"/>
    <property type="project" value="UniProtKB"/>
</dbReference>
<dbReference type="GO" id="GO:0043231">
    <property type="term" value="C:intracellular membrane-bounded organelle"/>
    <property type="evidence" value="ECO:0007669"/>
    <property type="project" value="Ensembl"/>
</dbReference>
<dbReference type="GO" id="GO:0005525">
    <property type="term" value="F:GTP binding"/>
    <property type="evidence" value="ECO:0007669"/>
    <property type="project" value="UniProtKB-KW"/>
</dbReference>
<dbReference type="CDD" id="cd01852">
    <property type="entry name" value="AIG1"/>
    <property type="match status" value="1"/>
</dbReference>
<dbReference type="FunFam" id="3.40.50.300:FF:000366">
    <property type="entry name" value="GTPase, IMAP family member 2"/>
    <property type="match status" value="1"/>
</dbReference>
<dbReference type="Gene3D" id="3.40.50.300">
    <property type="entry name" value="P-loop containing nucleotide triphosphate hydrolases"/>
    <property type="match status" value="1"/>
</dbReference>
<dbReference type="InterPro" id="IPR006703">
    <property type="entry name" value="G_AIG1"/>
</dbReference>
<dbReference type="InterPro" id="IPR045058">
    <property type="entry name" value="GIMA/IAN/Toc"/>
</dbReference>
<dbReference type="InterPro" id="IPR027417">
    <property type="entry name" value="P-loop_NTPase"/>
</dbReference>
<dbReference type="PANTHER" id="PTHR10903:SF182">
    <property type="entry name" value="GTPASE IMAP FAMILY MEMBER 4"/>
    <property type="match status" value="1"/>
</dbReference>
<dbReference type="PANTHER" id="PTHR10903">
    <property type="entry name" value="GTPASE, IMAP FAMILY MEMBER-RELATED"/>
    <property type="match status" value="1"/>
</dbReference>
<dbReference type="Pfam" id="PF04548">
    <property type="entry name" value="AIG1"/>
    <property type="match status" value="1"/>
</dbReference>
<dbReference type="SUPFAM" id="SSF52540">
    <property type="entry name" value="P-loop containing nucleoside triphosphate hydrolases"/>
    <property type="match status" value="1"/>
</dbReference>
<dbReference type="PROSITE" id="PS51720">
    <property type="entry name" value="G_AIG1"/>
    <property type="match status" value="1"/>
</dbReference>
<dbReference type="PROSITE" id="PS50096">
    <property type="entry name" value="IQ"/>
    <property type="match status" value="1"/>
</dbReference>